<reference evidence="22" key="1">
    <citation type="journal article" date="1996" name="Mol. Biochem. Parasitol.">
        <title>Analysis of a cation-transporting ATPase of Plasmodium falciparum.</title>
        <authorList>
            <person name="Dyer M."/>
            <person name="Jackson M."/>
            <person name="McWhinney C."/>
            <person name="Zhao G."/>
            <person name="Mikkelsen R."/>
        </authorList>
    </citation>
    <scope>NUCLEOTIDE SEQUENCE [MRNA]</scope>
    <scope>SUBCELLULAR LOCATION</scope>
    <scope>DEVELOPMENTAL STAGE</scope>
</reference>
<reference evidence="22" key="2">
    <citation type="journal article" date="2001" name="J. Biol. Chem.">
        <title>Expression and functional characterization of a Plasmodium falciparum Ca2+-ATPase (PfATP4) belonging to a subclass unique to apicomplexan organisms.</title>
        <authorList>
            <person name="Krishna S."/>
            <person name="Woodrow C."/>
            <person name="Webb R."/>
            <person name="Penny J."/>
            <person name="Takeyasu K."/>
            <person name="Kimura M."/>
            <person name="East J.M."/>
        </authorList>
    </citation>
    <scope>NUCLEOTIDE SEQUENCE [GENOMIC DNA]</scope>
    <scope>DEVELOPMENTAL STAGE</scope>
</reference>
<reference evidence="24" key="3">
    <citation type="journal article" date="2002" name="Nature">
        <title>Genome sequence of the human malaria parasite Plasmodium falciparum.</title>
        <authorList>
            <person name="Gardner M.J."/>
            <person name="Hall N."/>
            <person name="Fung E."/>
            <person name="White O."/>
            <person name="Berriman M."/>
            <person name="Hyman R.W."/>
            <person name="Carlton J.M."/>
            <person name="Pain A."/>
            <person name="Nelson K.E."/>
            <person name="Bowman S."/>
            <person name="Paulsen I.T."/>
            <person name="James K.D."/>
            <person name="Eisen J.A."/>
            <person name="Rutherford K.M."/>
            <person name="Salzberg S.L."/>
            <person name="Craig A."/>
            <person name="Kyes S."/>
            <person name="Chan M.-S."/>
            <person name="Nene V."/>
            <person name="Shallom S.J."/>
            <person name="Suh B."/>
            <person name="Peterson J."/>
            <person name="Angiuoli S."/>
            <person name="Pertea M."/>
            <person name="Allen J."/>
            <person name="Selengut J."/>
            <person name="Haft D."/>
            <person name="Mather M.W."/>
            <person name="Vaidya A.B."/>
            <person name="Martin D.M.A."/>
            <person name="Fairlamb A.H."/>
            <person name="Fraunholz M.J."/>
            <person name="Roos D.S."/>
            <person name="Ralph S.A."/>
            <person name="McFadden G.I."/>
            <person name="Cummings L.M."/>
            <person name="Subramanian G.M."/>
            <person name="Mungall C."/>
            <person name="Venter J.C."/>
            <person name="Carucci D.J."/>
            <person name="Hoffman S.L."/>
            <person name="Newbold C."/>
            <person name="Davis R.W."/>
            <person name="Fraser C.M."/>
            <person name="Barrell B.G."/>
        </authorList>
    </citation>
    <scope>NUCLEOTIDE SEQUENCE [LARGE SCALE GENOMIC DNA]</scope>
    <source>
        <strain evidence="24">3D7</strain>
    </source>
</reference>
<reference evidence="22" key="4">
    <citation type="journal article" date="2010" name="Science">
        <title>Spiroindolones, a potent compound class for the treatment of malaria.</title>
        <authorList>
            <person name="Rottmann M."/>
            <person name="McNamara C."/>
            <person name="Yeung B.K."/>
            <person name="Lee M.C."/>
            <person name="Zou B."/>
            <person name="Russell B."/>
            <person name="Seitz P."/>
            <person name="Plouffe D.M."/>
            <person name="Dharia N.V."/>
            <person name="Tan J."/>
            <person name="Cohen S.B."/>
            <person name="Spencer K.R."/>
            <person name="Gonzalez-Paez G.E."/>
            <person name="Lakshminarayana S.B."/>
            <person name="Goh A."/>
            <person name="Suwanarusk R."/>
            <person name="Jegla T."/>
            <person name="Schmitt E.K."/>
            <person name="Beck H.P."/>
            <person name="Brun R."/>
            <person name="Nosten F."/>
            <person name="Renia L."/>
            <person name="Dartois V."/>
            <person name="Keller T.H."/>
            <person name="Fidock D.A."/>
            <person name="Winzeler E.A."/>
            <person name="Diagana T.T."/>
        </authorList>
    </citation>
    <scope>SUBCELLULAR LOCATION</scope>
    <scope>VARIANTS SER-184; MET-203; ARG-223; VAL-263; PHE-398; ASN-418; ARG-990 AND TYR-1247</scope>
    <scope>MUTAGENESIS OF ILE-398; PRO-990 AND ASP-1247</scope>
    <source>
        <strain evidence="14">Dd2</strain>
    </source>
</reference>
<reference evidence="22" key="5">
    <citation type="journal article" date="2013" name="Cell Host Microbe">
        <title>Na(+) regulation in the malaria parasite Plasmodium falciparum involves the cation ATPase PfATP4 and is a target of the spiroindolone antimalarials.</title>
        <authorList>
            <person name="Spillman N.J."/>
            <person name="Allen R.J."/>
            <person name="McNamara C.W."/>
            <person name="Yeung B.K."/>
            <person name="Winzeler E.A."/>
            <person name="Diagana T.T."/>
            <person name="Kirk K."/>
        </authorList>
    </citation>
    <scope>FUNCTION</scope>
    <scope>CATALYTIC ACTIVITY</scope>
    <scope>ACTIVITY REGULATION</scope>
    <scope>SUBCELLULAR LOCATION</scope>
    <scope>MUTAGENESIS OF ILE-398 AND PRO-990</scope>
    <source>
        <strain>3D7</strain>
        <strain evidence="15">Dd2</strain>
    </source>
</reference>
<reference evidence="22" key="6">
    <citation type="journal article" date="2014" name="Proc. Natl. Acad. Sci. U.S.A.">
        <title>(+)-SJ733, a clinical candidate for malaria that acts through ATP4 to induce rapid host-mediated clearance of Plasmodium.</title>
        <authorList>
            <person name="Jimenez-Diaz M.B."/>
            <person name="Ebert D."/>
            <person name="Salinas Y."/>
            <person name="Pradhan A."/>
            <person name="Lehane A.M."/>
            <person name="Myrand-Lapierre M.E."/>
            <person name="O'Loughlin K.G."/>
            <person name="Shackleford D.M."/>
            <person name="Justino de Almeida M."/>
            <person name="Carrillo A.K."/>
            <person name="Clark J.A."/>
            <person name="Dennis A.S."/>
            <person name="Diep J."/>
            <person name="Deng X."/>
            <person name="Duffy S."/>
            <person name="Endsley A.N."/>
            <person name="Fedewa G."/>
            <person name="Guiguemde W.A."/>
            <person name="Gomez M.G."/>
            <person name="Holbrook G."/>
            <person name="Horst J."/>
            <person name="Kim C.C."/>
            <person name="Liu J."/>
            <person name="Lee M.C."/>
            <person name="Matheny A."/>
            <person name="Martinez M.S."/>
            <person name="Miller G."/>
            <person name="Rodriguez-Alejandre A."/>
            <person name="Sanz L."/>
            <person name="Sigal M."/>
            <person name="Spillman N.J."/>
            <person name="Stein P.D."/>
            <person name="Wang Z."/>
            <person name="Zhu F."/>
            <person name="Waterson D."/>
            <person name="Knapp S."/>
            <person name="Shelat A."/>
            <person name="Avery V.M."/>
            <person name="Fidock D.A."/>
            <person name="Gamo F.J."/>
            <person name="Charman S.A."/>
            <person name="Mirsalis J.C."/>
            <person name="Ma H."/>
            <person name="Ferrer S."/>
            <person name="Kirk K."/>
            <person name="Angulo-Barturen I."/>
            <person name="Kyle D.E."/>
            <person name="DeRisi J.L."/>
            <person name="Floyd D.M."/>
            <person name="Guy R.K."/>
        </authorList>
    </citation>
    <scope>FUNCTION</scope>
    <scope>ACTIVITY REGULATION</scope>
    <scope>VARIANTS HIS-350; THR-412; ASP-415; SER-966 AND THR-966</scope>
    <source>
        <strain>3D7</strain>
        <strain evidence="16">W2</strain>
    </source>
</reference>
<reference evidence="22" key="7">
    <citation type="journal article" date="2015" name="ACS Chem. Biol.">
        <title>Mutations in the P-type cation-transporter ATPase 4, PfATP4, mediate resistance to both aminopyrazole and spiroindolone antimalarials.</title>
        <authorList>
            <person name="Flannery E.L."/>
            <person name="McNamara C.W."/>
            <person name="Kim S.W."/>
            <person name="Kato T.S."/>
            <person name="Li F."/>
            <person name="Teng C.H."/>
            <person name="Gagaring K."/>
            <person name="Manary M.J."/>
            <person name="Barboa R."/>
            <person name="Meister S."/>
            <person name="Kuhen K."/>
            <person name="Vinetz J.M."/>
            <person name="Chatterjee A.K."/>
            <person name="Winzeler E.A."/>
        </authorList>
    </citation>
    <scope>FUNCTION</scope>
    <scope>VARIANTS VAL-187; LEU-203; THR-211 AND ARG-990</scope>
    <scope>MUTAGENESIS OF ALA-211; ILE-398 AND PRO-990</scope>
</reference>
<reference evidence="22" key="8">
    <citation type="journal article" date="2018" name="Antimicrob. Agents Chemother.">
        <title>Cell Swelling Induced by the Antimalarial KAE609 (Cipargamin) and Other PfATP4-Associated Antimalarials.</title>
        <authorList>
            <person name="Dennis A.S.M."/>
            <person name="Lehane A.M."/>
            <person name="Ridgway M.C."/>
            <person name="Holleran J.P."/>
            <person name="Kirk K."/>
        </authorList>
    </citation>
    <scope>FUNCTION</scope>
    <source>
        <strain>3D7</strain>
        <strain evidence="17">Dd2</strain>
    </source>
</reference>
<reference evidence="22" key="9">
    <citation type="journal article" date="2018" name="J. Biol. Chem.">
        <title>Biochemical characterization and chemical inhibition of PfATP4-associated Na+-ATPase activity in Plasmodium falciparum membranes.</title>
        <authorList>
            <person name="Rosling J.E.O."/>
            <person name="Ridgway M.C."/>
            <person name="Summers R.L."/>
            <person name="Kirk K."/>
            <person name="Lehane A.M."/>
        </authorList>
    </citation>
    <scope>FUNCTION</scope>
    <scope>CATALYTIC ACTIVITY</scope>
    <scope>ACTIVITY REGULATION</scope>
    <scope>BIOPHYSICOCHEMICAL PROPERTIES</scope>
    <scope>SUBCELLULAR LOCATION</scope>
    <scope>VARIANTS ASN-418 AND ARG-990</scope>
    <source>
        <strain evidence="18">Dd2</strain>
    </source>
</reference>
<reference evidence="22" key="10">
    <citation type="journal article" date="2019" name="Sci. Rep.">
        <title>A 4-cyano-3-methylisoquinoline inhibitor of Plasmodium falciparum growth targets the sodium efflux pump PfATP4.</title>
        <authorList>
            <person name="Gilson P.R."/>
            <person name="Kumarasingha R."/>
            <person name="Thompson J."/>
            <person name="Zhang X."/>
            <person name="Penington J.S."/>
            <person name="Kalhor R."/>
            <person name="Bullen H.E."/>
            <person name="Lehane A.M."/>
            <person name="Dans M.G."/>
            <person name="de Koning-Ward T.F."/>
            <person name="Holien J.K."/>
            <person name="Soares da Costa T.P."/>
            <person name="Hulett M.D."/>
            <person name="Buskes M.J."/>
            <person name="Crabb B.S."/>
            <person name="Kirk K."/>
            <person name="Papenfuss A.T."/>
            <person name="Cowman A.F."/>
            <person name="Abbott B.M."/>
        </authorList>
    </citation>
    <scope>FUNCTION</scope>
    <scope>CATALYTIC ACTIVITY</scope>
    <scope>ACTIVITY REGULATION</scope>
    <scope>VARIANT ARG-374</scope>
    <source>
        <strain evidence="19">3D7</strain>
    </source>
</reference>
<reference evidence="22" key="11">
    <citation type="journal article" date="2022" name="Nat. Commun.">
        <title>A G358S mutation in the Plasmodium falciparum Na+ pump PfATP4 confers clinically-relevant resistance to cipargamin.</title>
        <authorList>
            <person name="Qiu D."/>
            <person name="Pei J.V."/>
            <person name="Rosling J.E.O."/>
            <person name="Thathy V."/>
            <person name="Li D."/>
            <person name="Xue Y."/>
            <person name="Tanner J.D."/>
            <person name="Penington J.S."/>
            <person name="Aw Y.T.V."/>
            <person name="Aw J.Y.H."/>
            <person name="Xu G."/>
            <person name="Tripathi A.K."/>
            <person name="Gnadig N.F."/>
            <person name="Yeo T."/>
            <person name="Fairhurst K.J."/>
            <person name="Stokes B.H."/>
            <person name="Murithi J.M."/>
            <person name="Kuempornsin K."/>
            <person name="Hasemer H."/>
            <person name="Dennis A.S.M."/>
            <person name="Ridgway M.C."/>
            <person name="Schmitt E.K."/>
            <person name="Straimer J."/>
            <person name="Papenfuss A.T."/>
            <person name="Lee M.C.S."/>
            <person name="Corry B."/>
            <person name="Sinnis P."/>
            <person name="Fidock D.A."/>
            <person name="van Dooren G.G."/>
            <person name="Kirk K."/>
            <person name="Lehane A.M."/>
        </authorList>
    </citation>
    <scope>FUNCTION</scope>
    <scope>CATALYTIC ACTIVITY</scope>
    <scope>ACTIVITY REGULATION</scope>
    <scope>VARIANTS LYS-172; GLU-353; SER-358; ASN-418; SER-966; THR-966 AND ARG-990</scope>
    <scope>MUTAGENESIS OF GLY-358</scope>
    <source>
        <strain>Dd2</strain>
        <strain>NF54</strain>
        <strain evidence="20">W2</strain>
    </source>
</reference>
<evidence type="ECO:0000255" key="1"/>
<evidence type="ECO:0000256" key="2">
    <source>
        <dbReference type="SAM" id="MobiDB-lite"/>
    </source>
</evidence>
<evidence type="ECO:0000269" key="3">
    <source>
    </source>
</evidence>
<evidence type="ECO:0000269" key="4">
    <source>
    </source>
</evidence>
<evidence type="ECO:0000269" key="5">
    <source>
    </source>
</evidence>
<evidence type="ECO:0000269" key="6">
    <source>
    </source>
</evidence>
<evidence type="ECO:0000269" key="7">
    <source>
    </source>
</evidence>
<evidence type="ECO:0000269" key="8">
    <source>
    </source>
</evidence>
<evidence type="ECO:0000269" key="9">
    <source>
    </source>
</evidence>
<evidence type="ECO:0000269" key="10">
    <source>
    </source>
</evidence>
<evidence type="ECO:0000269" key="11">
    <source>
    </source>
</evidence>
<evidence type="ECO:0000269" key="12">
    <source>
    </source>
</evidence>
<evidence type="ECO:0000303" key="13">
    <source>
    </source>
</evidence>
<evidence type="ECO:0000303" key="14">
    <source>
    </source>
</evidence>
<evidence type="ECO:0000303" key="15">
    <source>
    </source>
</evidence>
<evidence type="ECO:0000303" key="16">
    <source>
    </source>
</evidence>
<evidence type="ECO:0000303" key="17">
    <source>
    </source>
</evidence>
<evidence type="ECO:0000303" key="18">
    <source>
    </source>
</evidence>
<evidence type="ECO:0000303" key="19">
    <source>
    </source>
</evidence>
<evidence type="ECO:0000303" key="20">
    <source>
    </source>
</evidence>
<evidence type="ECO:0000303" key="21">
    <source>
    </source>
</evidence>
<evidence type="ECO:0000305" key="22"/>
<evidence type="ECO:0000312" key="23">
    <source>
        <dbReference type="EMBL" id="CZT99281.1"/>
    </source>
</evidence>
<evidence type="ECO:0000312" key="24">
    <source>
        <dbReference type="Proteomes" id="UP000001450"/>
    </source>
</evidence>
<comment type="function">
    <text evidence="5 6 7 8 9 10 11">Sodium-exporting ATPase (PubMed:23414762, PubMed:29986883, PubMed:31311978, PubMed:36180431). Required for the extrusion of Na(+) from the intraerythrocytic parasites to maintain a low cytosolic concentration of Na(+) (PubMed:23414762, PubMed:25322084, PubMed:25453091, PubMed:29555632, PubMed:36180431).</text>
</comment>
<comment type="catalytic activity">
    <reaction evidence="5 9 10 11">
        <text>Na(+)(in) + ATP + H2O = Na(+)(out) + ADP + phosphate + H(+)</text>
        <dbReference type="Rhea" id="RHEA:14633"/>
        <dbReference type="ChEBI" id="CHEBI:15377"/>
        <dbReference type="ChEBI" id="CHEBI:15378"/>
        <dbReference type="ChEBI" id="CHEBI:29101"/>
        <dbReference type="ChEBI" id="CHEBI:30616"/>
        <dbReference type="ChEBI" id="CHEBI:43474"/>
        <dbReference type="ChEBI" id="CHEBI:456216"/>
        <dbReference type="EC" id="7.2.2.3"/>
    </reaction>
    <physiologicalReaction direction="left-to-right" evidence="22">
        <dbReference type="Rhea" id="RHEA:14634"/>
    </physiologicalReaction>
</comment>
<comment type="activity regulation">
    <text evidence="5 7 9 10 11">Inhibited by cipargamin and other spiroindolone compounds (PubMed:23414762, PubMed:29986883, PubMed:36180431). Inhibited by 4-cyano-3-methylisoquinoline derivatives MB14 and MB10 but not RK18 (PubMed:31311978). Inhibited by (+)-SJ733, a dihydroisoquinolone compound (PubMed:25453091, PubMed:36180431).</text>
</comment>
<comment type="biophysicochemical properties">
    <kinetics>
        <KM evidence="9">0.23 mM for ATP (in the presence of 150-153 mM of Na(+))</KM>
        <KM evidence="9">16.1 mM for Na(+)</KM>
    </kinetics>
</comment>
<comment type="subcellular location">
    <subcellularLocation>
        <location evidence="4 5 9 12">Cell membrane</location>
        <topology evidence="1">Multi-pass membrane protein</topology>
    </subcellularLocation>
</comment>
<comment type="developmental stage">
    <text evidence="3 12">Expressed throughout the asexual cycle, including trophozoites, early schizonts and free merozoites (at protein level) (PubMed:8813672). In the synchronized cultures of asexual stage parasites, relatively low expression is observed shortly after invasion (PubMed:11145964). Expression increases at 8 hours, peaks at 16 hours and decreases slightly by 32 hours after invasion (PubMed:11145964). Maximal levels are observed in mature asexual stages 40 hours after invasion (PubMed:11145964).</text>
</comment>
<comment type="miscellaneous">
    <text evidence="7 8 10">ATP4 inhibitors cause swelling and partial lysis of infected erythrocytes, probably due to the osmotic swelling of the intracellular parasites because of Na(+) accumulation in the parasite cells.</text>
</comment>
<comment type="similarity">
    <text evidence="22">Belongs to the cation transport ATPase (P-type) (TC 3.A.3) family.</text>
</comment>
<comment type="caution">
    <text evidence="3 4 5">Was initially described as Ca(2+)-transporting ATPase (PubMed:11145964). In the later studies, Ca(2+) transport function has not been demonstrated (PubMed:20813948, PubMed:23414762).</text>
</comment>
<protein>
    <recommendedName>
        <fullName evidence="22">P-type sodium-transporting ATPase4</fullName>
        <shortName evidence="13 14 15 18 19 21">PfATP4</shortName>
        <shortName evidence="21">PfATPase4</shortName>
        <ecNumber evidence="5 9 10 11">7.2.2.3</ecNumber>
    </recommendedName>
    <alternativeName>
        <fullName evidence="14">P-type cation-transporter ATPase4</fullName>
    </alternativeName>
</protein>
<accession>A0A143ZZK9</accession>
<dbReference type="EC" id="7.2.2.3" evidence="5 9 10 11"/>
<dbReference type="EMBL" id="LN999947">
    <property type="protein sequence ID" value="CZT99281.1"/>
    <property type="molecule type" value="Genomic_DNA"/>
</dbReference>
<dbReference type="SMR" id="A0A143ZZK9"/>
<dbReference type="FunCoup" id="A0A143ZZK9">
    <property type="interactions" value="12"/>
</dbReference>
<dbReference type="STRING" id="5833.PFL0590c"/>
<dbReference type="DrugBank" id="DB11638">
    <property type="generic name" value="Artenimol"/>
</dbReference>
<dbReference type="GuidetoPHARMACOLOGY" id="2971"/>
<dbReference type="PaxDb" id="5833-PFL0590c"/>
<dbReference type="EnsemblProtists" id="CZT99281">
    <property type="protein sequence ID" value="CZT99281"/>
    <property type="gene ID" value="PF3D7_1211900"/>
</dbReference>
<dbReference type="VEuPathDB" id="PlasmoDB:PF3D7_1211900"/>
<dbReference type="InParanoid" id="A0A143ZZK9"/>
<dbReference type="OrthoDB" id="116380at2759"/>
<dbReference type="PhylomeDB" id="A0A143ZZK9"/>
<dbReference type="Reactome" id="R-PFA-936837">
    <property type="pathway name" value="Ion transport by P-type ATPases"/>
</dbReference>
<dbReference type="Proteomes" id="UP000001450">
    <property type="component" value="Chromosome 12"/>
</dbReference>
<dbReference type="GO" id="GO:0005886">
    <property type="term" value="C:plasma membrane"/>
    <property type="evidence" value="ECO:0000318"/>
    <property type="project" value="GO_Central"/>
</dbReference>
<dbReference type="GO" id="GO:0005524">
    <property type="term" value="F:ATP binding"/>
    <property type="evidence" value="ECO:0007669"/>
    <property type="project" value="UniProtKB-KW"/>
</dbReference>
<dbReference type="GO" id="GO:0016887">
    <property type="term" value="F:ATP hydrolysis activity"/>
    <property type="evidence" value="ECO:0007669"/>
    <property type="project" value="InterPro"/>
</dbReference>
<dbReference type="GO" id="GO:0008556">
    <property type="term" value="F:P-type potassium transmembrane transporter activity"/>
    <property type="evidence" value="ECO:0000318"/>
    <property type="project" value="GO_Central"/>
</dbReference>
<dbReference type="GO" id="GO:0008554">
    <property type="term" value="F:P-type sodium transporter activity"/>
    <property type="evidence" value="ECO:0000318"/>
    <property type="project" value="GO_Central"/>
</dbReference>
<dbReference type="GO" id="GO:0006874">
    <property type="term" value="P:intracellular calcium ion homeostasis"/>
    <property type="evidence" value="ECO:0000318"/>
    <property type="project" value="GO_Central"/>
</dbReference>
<dbReference type="GO" id="GO:0034220">
    <property type="term" value="P:monoatomic ion transmembrane transport"/>
    <property type="evidence" value="ECO:0000318"/>
    <property type="project" value="GO_Central"/>
</dbReference>
<dbReference type="GO" id="GO:0006813">
    <property type="term" value="P:potassium ion transport"/>
    <property type="evidence" value="ECO:0000318"/>
    <property type="project" value="GO_Central"/>
</dbReference>
<dbReference type="GO" id="GO:0006814">
    <property type="term" value="P:sodium ion transport"/>
    <property type="evidence" value="ECO:0000318"/>
    <property type="project" value="GO_Central"/>
</dbReference>
<dbReference type="FunFam" id="3.40.50.1000:FF:000001">
    <property type="entry name" value="Phospholipid-transporting ATPase IC"/>
    <property type="match status" value="1"/>
</dbReference>
<dbReference type="FunFam" id="3.40.50.1000:FF:000083">
    <property type="entry name" value="Sodium/potassium-transporting ATPase subunit alpha"/>
    <property type="match status" value="1"/>
</dbReference>
<dbReference type="Gene3D" id="3.40.1110.10">
    <property type="entry name" value="Calcium-transporting ATPase, cytoplasmic domain N"/>
    <property type="match status" value="1"/>
</dbReference>
<dbReference type="Gene3D" id="2.70.150.10">
    <property type="entry name" value="Calcium-transporting ATPase, cytoplasmic transduction domain A"/>
    <property type="match status" value="1"/>
</dbReference>
<dbReference type="Gene3D" id="1.20.1110.10">
    <property type="entry name" value="Calcium-transporting ATPase, transmembrane domain"/>
    <property type="match status" value="2"/>
</dbReference>
<dbReference type="Gene3D" id="3.40.50.1000">
    <property type="entry name" value="HAD superfamily/HAD-like"/>
    <property type="match status" value="1"/>
</dbReference>
<dbReference type="InterPro" id="IPR006068">
    <property type="entry name" value="ATPase_P-typ_cation-transptr_C"/>
</dbReference>
<dbReference type="InterPro" id="IPR004014">
    <property type="entry name" value="ATPase_P-typ_cation-transptr_N"/>
</dbReference>
<dbReference type="InterPro" id="IPR023299">
    <property type="entry name" value="ATPase_P-typ_cyto_dom_N"/>
</dbReference>
<dbReference type="InterPro" id="IPR018303">
    <property type="entry name" value="ATPase_P-typ_P_site"/>
</dbReference>
<dbReference type="InterPro" id="IPR023298">
    <property type="entry name" value="ATPase_P-typ_TM_dom_sf"/>
</dbReference>
<dbReference type="InterPro" id="IPR008250">
    <property type="entry name" value="ATPase_P-typ_transduc_dom_A_sf"/>
</dbReference>
<dbReference type="InterPro" id="IPR050510">
    <property type="entry name" value="Cation_transp_ATPase_P-type"/>
</dbReference>
<dbReference type="InterPro" id="IPR036412">
    <property type="entry name" value="HAD-like_sf"/>
</dbReference>
<dbReference type="InterPro" id="IPR023214">
    <property type="entry name" value="HAD_sf"/>
</dbReference>
<dbReference type="InterPro" id="IPR001757">
    <property type="entry name" value="P_typ_ATPase"/>
</dbReference>
<dbReference type="InterPro" id="IPR044492">
    <property type="entry name" value="P_typ_ATPase_HD_dom"/>
</dbReference>
<dbReference type="NCBIfam" id="TIGR01494">
    <property type="entry name" value="ATPase_P-type"/>
    <property type="match status" value="2"/>
</dbReference>
<dbReference type="PANTHER" id="PTHR43294:SF20">
    <property type="entry name" value="P-TYPE ATPASE"/>
    <property type="match status" value="1"/>
</dbReference>
<dbReference type="PANTHER" id="PTHR43294">
    <property type="entry name" value="SODIUM/POTASSIUM-TRANSPORTING ATPASE SUBUNIT ALPHA"/>
    <property type="match status" value="1"/>
</dbReference>
<dbReference type="Pfam" id="PF13246">
    <property type="entry name" value="Cation_ATPase"/>
    <property type="match status" value="1"/>
</dbReference>
<dbReference type="Pfam" id="PF00689">
    <property type="entry name" value="Cation_ATPase_C"/>
    <property type="match status" value="1"/>
</dbReference>
<dbReference type="Pfam" id="PF00690">
    <property type="entry name" value="Cation_ATPase_N"/>
    <property type="match status" value="1"/>
</dbReference>
<dbReference type="Pfam" id="PF00122">
    <property type="entry name" value="E1-E2_ATPase"/>
    <property type="match status" value="1"/>
</dbReference>
<dbReference type="Pfam" id="PF00702">
    <property type="entry name" value="Hydrolase"/>
    <property type="match status" value="1"/>
</dbReference>
<dbReference type="PRINTS" id="PR00119">
    <property type="entry name" value="CATATPASE"/>
</dbReference>
<dbReference type="PRINTS" id="PR00120">
    <property type="entry name" value="HATPASE"/>
</dbReference>
<dbReference type="SFLD" id="SFLDS00003">
    <property type="entry name" value="Haloacid_Dehalogenase"/>
    <property type="match status" value="1"/>
</dbReference>
<dbReference type="SFLD" id="SFLDF00027">
    <property type="entry name" value="p-type_atpase"/>
    <property type="match status" value="1"/>
</dbReference>
<dbReference type="SMART" id="SM00831">
    <property type="entry name" value="Cation_ATPase_N"/>
    <property type="match status" value="1"/>
</dbReference>
<dbReference type="SUPFAM" id="SSF81653">
    <property type="entry name" value="Calcium ATPase, transduction domain A"/>
    <property type="match status" value="1"/>
</dbReference>
<dbReference type="SUPFAM" id="SSF81665">
    <property type="entry name" value="Calcium ATPase, transmembrane domain M"/>
    <property type="match status" value="1"/>
</dbReference>
<dbReference type="SUPFAM" id="SSF56784">
    <property type="entry name" value="HAD-like"/>
    <property type="match status" value="1"/>
</dbReference>
<dbReference type="SUPFAM" id="SSF81660">
    <property type="entry name" value="Metal cation-transporting ATPase, ATP-binding domain N"/>
    <property type="match status" value="1"/>
</dbReference>
<dbReference type="PROSITE" id="PS00154">
    <property type="entry name" value="ATPASE_E1_E2"/>
    <property type="match status" value="1"/>
</dbReference>
<name>ATP4_PLAF7</name>
<sequence length="1264" mass="140262">MSSQNNNKQGGQDINNKKDSDDIKPSVSKEDLINSLKNDELNKNTTMDQNDMKKNENMNIKKNEVLNNSNNVEDGDNENSKFMNKSKEGLNNINGEKNDDNNSIVKVEESPKSIGYNYYASESIENLCKEFGLESINTGLNSEQVKINRDKYGENFIEKDEVVPVWLIFLSQYCSPVVLLLLVAAVASLALNEVVEGVAIISIVTLNACLATYMEKSSGDAIGKLAEMASPQCTVLRNGQKVVIPSREVVVGDVVLINTGDSISADLRLFDVIELKTNESLLTGESEDIKKTIVADNLSTPFATNLCFATTSVTSGSGKGIVISTGLDTQVGKIASQLKKSSKGSKLTPLQVALNKLGGLIGLIAIIVLVVIISLAVIIKYRDPAHADKDPTFVIIIIGVGFAVSSIPEGLPMVVTITLSAGAKDMVKKNANVRKLPAVETLGCCSVICSDKTGTLTEGKMTAINAVTICKNSSLSDENNKLTKTFDFYPTKGFEPCGGLFDSNELTSEKKKEIVIAKNQNTSYDKVLYNYGNPSNKSVIVDKTRSLMFAAYLNSYDTTLSRDPKTLKWGIHGNMSEGPIVVAAAKVGYSFINNPNHKSYLDNFQRLDDLEVTFNSSRKMKITFYKLKTVNVFENVYLDKPGKVYTHVALIKGAPDRLLDRSTHLLEETSMKKVQVSWNSTITQEERNVLIKKNLELSQKALRVLSICIKPLTDQNIEELKKLEDADERLKYVNYDENGGFIPMGYVASFDPPRPGVKEAIQTCREAQVKVIMITGDQKPTAVAIGKLIGLIEEKSEQVEDINSLAIECSELHINKNPNEPILPNDQLDEFTDKILIYSRAQPEDKITIVQSLKRKGYLVAMTGDGVNDAPALKAADIGVAMGINGTEVAKGASEMILIDDNFCTVVSAIDVGRTIFSNIQKFVCFLLGTNIGEIIYLSVAIVAQMPFPLEALQILFLNLMTDGCPAVALSREPPNDDNMKTPPRPKKQPIMTKRWWFYGILPHTIFEALCVLLSLAFSLYICTGFYNLNGIHNLCKTVNLVDVNDANVYHEYKYFCSSYEYRISTDYVGWVTNVSFWDPQNNEAVNFWGAAKGKVENINPLSDIVHPELRLRMQDGCSGDLTLDENGWCRPKDNKTSDGYNDELEGILKKGFEDVTAKGSKRGRTMAFISAVWCEMLRAYTVRSWEPFYKVFNRNMWMHLACSISATLTFLSTCIPGITSILNTTCLLWWQYLLAIFWALLNLFLDEIVPKVIYRRKYMTIKN</sequence>
<proteinExistence type="evidence at protein level"/>
<keyword id="KW-0067">ATP-binding</keyword>
<keyword id="KW-1003">Cell membrane</keyword>
<keyword id="KW-0378">Hydrolase</keyword>
<keyword id="KW-0406">Ion transport</keyword>
<keyword id="KW-0472">Membrane</keyword>
<keyword id="KW-0547">Nucleotide-binding</keyword>
<keyword id="KW-1185">Reference proteome</keyword>
<keyword id="KW-0915">Sodium</keyword>
<keyword id="KW-0739">Sodium transport</keyword>
<keyword id="KW-1278">Translocase</keyword>
<keyword id="KW-0812">Transmembrane</keyword>
<keyword id="KW-1133">Transmembrane helix</keyword>
<keyword id="KW-0813">Transport</keyword>
<gene>
    <name evidence="22" type="primary">ATP4</name>
    <name evidence="23" type="ORF">PF3D7_1211900</name>
</gene>
<feature type="chain" id="PRO_0000459730" description="P-type sodium-transporting ATPase4">
    <location>
        <begin position="1"/>
        <end position="1264"/>
    </location>
</feature>
<feature type="transmembrane region" description="Helical" evidence="1">
    <location>
        <begin position="165"/>
        <end position="185"/>
    </location>
</feature>
<feature type="transmembrane region" description="Helical" evidence="1">
    <location>
        <begin position="186"/>
        <end position="206"/>
    </location>
</feature>
<feature type="transmembrane region" description="Helical" evidence="1">
    <location>
        <begin position="359"/>
        <end position="379"/>
    </location>
</feature>
<feature type="transmembrane region" description="Helical" evidence="1">
    <location>
        <begin position="393"/>
        <end position="413"/>
    </location>
</feature>
<feature type="transmembrane region" description="Helical" evidence="1">
    <location>
        <begin position="923"/>
        <end position="943"/>
    </location>
</feature>
<feature type="transmembrane region" description="Helical" evidence="1">
    <location>
        <begin position="1006"/>
        <end position="1026"/>
    </location>
</feature>
<feature type="transmembrane region" description="Helical" evidence="1">
    <location>
        <begin position="1203"/>
        <end position="1223"/>
    </location>
</feature>
<feature type="transmembrane region" description="Helical" evidence="1">
    <location>
        <begin position="1226"/>
        <end position="1246"/>
    </location>
</feature>
<feature type="region of interest" description="Disordered" evidence="2">
    <location>
        <begin position="1"/>
        <end position="102"/>
    </location>
</feature>
<feature type="compositionally biased region" description="Polar residues" evidence="2">
    <location>
        <begin position="1"/>
        <end position="12"/>
    </location>
</feature>
<feature type="compositionally biased region" description="Basic and acidic residues" evidence="2">
    <location>
        <begin position="15"/>
        <end position="42"/>
    </location>
</feature>
<feature type="compositionally biased region" description="Basic and acidic residues" evidence="2">
    <location>
        <begin position="50"/>
        <end position="64"/>
    </location>
</feature>
<feature type="sequence variant" description="Increases resting cytosolic Na(+) concentration." evidence="11">
    <original>Q</original>
    <variation>K</variation>
    <location>
        <position position="172"/>
    </location>
</feature>
<feature type="sequence variant" description="Found in parasites grown in the presence of spiroindolone compounds." evidence="4">
    <original>A</original>
    <variation>S</variation>
    <location>
        <position position="184"/>
    </location>
</feature>
<feature type="sequence variant" description="Found in parasites grown in the presence of aminopyrazole compound GNF-Pf4492." evidence="6">
    <original>A</original>
    <variation>V</variation>
    <location>
        <position position="187"/>
    </location>
</feature>
<feature type="sequence variant" description="Found in parasites grown in the presence of aminopyrazole compound GNF-Pf4492." evidence="6">
    <original>I</original>
    <variation>L</variation>
    <location>
        <position position="203"/>
    </location>
</feature>
<feature type="sequence variant" description="Found in parasites grown in the presence of spiroindolone compounds." evidence="4">
    <original>I</original>
    <variation>M</variation>
    <location>
        <position position="203"/>
    </location>
</feature>
<feature type="sequence variant" description="Found in parasites grown in the presence of aminopyrazole compound GNF-Pf4492; confers resistance to GNF-Pf4492." evidence="6">
    <original>A</original>
    <variation>T</variation>
    <location>
        <position position="211"/>
    </location>
</feature>
<feature type="sequence variant" description="Found in parasites grown in the presence of spiroindolone compounds." evidence="4">
    <original>G</original>
    <variation>R</variation>
    <location>
        <position position="223"/>
    </location>
</feature>
<feature type="sequence variant" description="Found in parasites grown in the presence of spiroindolone compounds." evidence="4">
    <original>I</original>
    <variation>V</variation>
    <location>
        <position position="263"/>
    </location>
</feature>
<feature type="sequence variant" description="Found in parasites grown in the presence of dihydroisoquinolone compounds; reduces parasite fitness and increases resting cytosolic Na(+) concentration." evidence="7">
    <original>L</original>
    <variation>H</variation>
    <location>
        <position position="350"/>
    </location>
</feature>
<feature type="sequence variant" description="Increases resting cytosolic Na(+) concentration." evidence="11">
    <original>A</original>
    <variation>E</variation>
    <location>
        <position position="353"/>
    </location>
</feature>
<feature type="sequence variant" description="Found in parasites grown in the presence of cipargamin or (+)-SJ733; confers high-level resistance to cipargamin and (+)-SJ733 and moderate-level resistance to PA21A050 and MMV006656; reduces affinity to Na(+) and increases resting cytosolic Na(+) concentration; no significant change in the susceptibility to MMV665949, chloroquine or dihydroartemisinin; no significant effect on the length of the intra-erythrocytic cycle or on the number of viable merozoites produced per cycle during the asexual blood stage." evidence="11">
    <original>G</original>
    <variation>S</variation>
    <location>
        <position position="358"/>
    </location>
</feature>
<feature type="sequence variant" description="Found in parasites grown in the presence of 4-cyano-3-methylisoquinoline derivative MB14; most likely confers resistance to 4-cyano-3-methylisoquinoline derivatives MB14, MB10 and unrelated compound cipargamin." evidence="10">
    <original>S</original>
    <variation>R</variation>
    <location>
        <position position="374"/>
    </location>
</feature>
<feature type="sequence variant" description="Found in parasites grown in the presence of spiroindolone compounds; confers resistance to spiroindolones." evidence="4">
    <original>I</original>
    <variation>F</variation>
    <location>
        <position position="398"/>
    </location>
</feature>
<feature type="sequence variant" description="Found in parasites grown in the presence of dihydroisoquinolone compounds." evidence="7">
    <original>P</original>
    <variation>T</variation>
    <location>
        <position position="412"/>
    </location>
</feature>
<feature type="sequence variant" description="Found in parasites grown in the presence of dihydroisoquinolone compounds." evidence="7">
    <original>V</original>
    <variation>D</variation>
    <location>
        <position position="415"/>
    </location>
</feature>
<feature type="sequence variant" description="Found in parasites grown in the presence of spiroindolone compounds; decreases sensitivity to cipargamin; increases resting cytosolic Na(+) concentration; decreases sensitivity to cipargamin and (+)-SJ733, slightly increases sensitivity to dihydroartemisinin, decreases affinity for Na(+), increases resting cytosolic Na(+) concentration; when associated with R-990." evidence="4 9 11">
    <original>T</original>
    <variation>N</variation>
    <location>
        <position position="418"/>
    </location>
</feature>
<feature type="sequence variant" description="Found in parasites grown in the presence of dihydroisoquinolone compounds; increases resting cytosolic Na(+) concentration." evidence="7 11">
    <original>P</original>
    <variation>S</variation>
    <location>
        <position position="966"/>
    </location>
</feature>
<feature type="sequence variant" description="Found in parasites grown in the presence of dihydroisoquinolone compounds; reduces parasite fitness; no significant effect on resting cytosolic Na(+) concentration." evidence="7 11">
    <original>P</original>
    <variation>T</variation>
    <location>
        <position position="966"/>
    </location>
</feature>
<feature type="sequence variant" description="Found in parasites grown in the presence of spiroindolone compounds or aminopyrazole compound GNF-Pf4492; confers resistance to spiroindolones; decreases sensitivity to cipargaminnd and (+)-SJ733, slightly increases sensitivity to dihydroartemisinin, decreases affinity for Na(+), increases resting cytosolic Na(+) concentration; when associated with N-418." evidence="4 6 9 11">
    <original>P</original>
    <variation>R</variation>
    <location>
        <position position="990"/>
    </location>
</feature>
<feature type="sequence variant" description="Found in parasites grown in the presence of spiroindolone compounds; confers resistance to spiroindolones." evidence="4">
    <original>D</original>
    <variation>Y</variation>
    <location>
        <position position="1247"/>
    </location>
</feature>
<feature type="mutagenesis site" description="Decreases sensitivity to aminopyrazole GNF-Pf4492." evidence="6">
    <original>A</original>
    <variation>T</variation>
    <location>
        <position position="211"/>
    </location>
</feature>
<feature type="mutagenesis site" description="Decreases sensitivity to cipargamin and (+)-SJ733. Does not affect the establishment of infection in mosquitoes and parasite transmission." evidence="11">
    <original>G</original>
    <variation>S</variation>
    <location>
        <position position="358"/>
    </location>
</feature>
<feature type="mutagenesis site" description="Decreases sensitivity to spiroindolones and aminopyrazole GNF-Pf4492, increases resting cytosolic Na(+) concentration and sensitivity to the growth-inhibitory effects of supraphysiological extracellular Na(+) concentrations, decreases the rate of efflux of Na(+) following an imposed Na(+) load; when associated with R-990." evidence="4 5 6">
    <original>I</original>
    <variation>F</variation>
    <location>
        <position position="398"/>
    </location>
</feature>
<feature type="mutagenesis site" description="Decreases sensitivity to spiroindolones and aminopyrazole GNF-Pf4492, increases resting cytosolic Na(+) concentration and sensitivity to the growth-inhibitory effects of supraphysiological extracellular Na(+) concentrations, decreases the rate of efflux of Na(+) following an imposed Na(+) load; when associated with F-398." evidence="4 5 6">
    <original>P</original>
    <variation>R</variation>
    <location>
        <position position="990"/>
    </location>
</feature>
<feature type="mutagenesis site" description="Decreases sensitivity to spiroindolone compounds." evidence="4">
    <original>D</original>
    <variation>Y</variation>
    <location>
        <position position="1247"/>
    </location>
</feature>
<organism evidence="24">
    <name type="scientific">Plasmodium falciparum (isolate 3D7)</name>
    <dbReference type="NCBI Taxonomy" id="36329"/>
    <lineage>
        <taxon>Eukaryota</taxon>
        <taxon>Sar</taxon>
        <taxon>Alveolata</taxon>
        <taxon>Apicomplexa</taxon>
        <taxon>Aconoidasida</taxon>
        <taxon>Haemosporida</taxon>
        <taxon>Plasmodiidae</taxon>
        <taxon>Plasmodium</taxon>
        <taxon>Plasmodium (Laverania)</taxon>
    </lineage>
</organism>